<organism>
    <name type="scientific">Escherichia coli O45:K1 (strain S88 / ExPEC)</name>
    <dbReference type="NCBI Taxonomy" id="585035"/>
    <lineage>
        <taxon>Bacteria</taxon>
        <taxon>Pseudomonadati</taxon>
        <taxon>Pseudomonadota</taxon>
        <taxon>Gammaproteobacteria</taxon>
        <taxon>Enterobacterales</taxon>
        <taxon>Enterobacteriaceae</taxon>
        <taxon>Escherichia</taxon>
    </lineage>
</organism>
<protein>
    <recommendedName>
        <fullName evidence="1">Cysteine desulfuration protein SufE</fullName>
    </recommendedName>
</protein>
<proteinExistence type="inferred from homology"/>
<feature type="chain" id="PRO_1000188318" description="Cysteine desulfuration protein SufE">
    <location>
        <begin position="1"/>
        <end position="138"/>
    </location>
</feature>
<feature type="active site" description="Cysteine persulfide intermediate" evidence="1">
    <location>
        <position position="51"/>
    </location>
</feature>
<reference key="1">
    <citation type="journal article" date="2009" name="PLoS Genet.">
        <title>Organised genome dynamics in the Escherichia coli species results in highly diverse adaptive paths.</title>
        <authorList>
            <person name="Touchon M."/>
            <person name="Hoede C."/>
            <person name="Tenaillon O."/>
            <person name="Barbe V."/>
            <person name="Baeriswyl S."/>
            <person name="Bidet P."/>
            <person name="Bingen E."/>
            <person name="Bonacorsi S."/>
            <person name="Bouchier C."/>
            <person name="Bouvet O."/>
            <person name="Calteau A."/>
            <person name="Chiapello H."/>
            <person name="Clermont O."/>
            <person name="Cruveiller S."/>
            <person name="Danchin A."/>
            <person name="Diard M."/>
            <person name="Dossat C."/>
            <person name="Karoui M.E."/>
            <person name="Frapy E."/>
            <person name="Garry L."/>
            <person name="Ghigo J.M."/>
            <person name="Gilles A.M."/>
            <person name="Johnson J."/>
            <person name="Le Bouguenec C."/>
            <person name="Lescat M."/>
            <person name="Mangenot S."/>
            <person name="Martinez-Jehanne V."/>
            <person name="Matic I."/>
            <person name="Nassif X."/>
            <person name="Oztas S."/>
            <person name="Petit M.A."/>
            <person name="Pichon C."/>
            <person name="Rouy Z."/>
            <person name="Ruf C.S."/>
            <person name="Schneider D."/>
            <person name="Tourret J."/>
            <person name="Vacherie B."/>
            <person name="Vallenet D."/>
            <person name="Medigue C."/>
            <person name="Rocha E.P.C."/>
            <person name="Denamur E."/>
        </authorList>
    </citation>
    <scope>NUCLEOTIDE SEQUENCE [LARGE SCALE GENOMIC DNA]</scope>
    <source>
        <strain>S88 / ExPEC</strain>
    </source>
</reference>
<keyword id="KW-0963">Cytoplasm</keyword>
<keyword id="KW-1185">Reference proteome</keyword>
<gene>
    <name evidence="1" type="primary">sufE</name>
    <name type="ordered locus">ECS88_1729</name>
</gene>
<name>SUFE_ECO45</name>
<dbReference type="EMBL" id="CU928161">
    <property type="protein sequence ID" value="CAR03038.1"/>
    <property type="molecule type" value="Genomic_DNA"/>
</dbReference>
<dbReference type="RefSeq" id="WP_001196521.1">
    <property type="nucleotide sequence ID" value="NC_011742.1"/>
</dbReference>
<dbReference type="SMR" id="B7MA31"/>
<dbReference type="KEGG" id="ecz:ECS88_1729"/>
<dbReference type="HOGENOM" id="CLU_124502_1_1_6"/>
<dbReference type="UniPathway" id="UPA00266"/>
<dbReference type="Proteomes" id="UP000000747">
    <property type="component" value="Chromosome"/>
</dbReference>
<dbReference type="GO" id="GO:0005737">
    <property type="term" value="C:cytoplasm"/>
    <property type="evidence" value="ECO:0007669"/>
    <property type="project" value="UniProtKB-SubCell"/>
</dbReference>
<dbReference type="GO" id="GO:0016226">
    <property type="term" value="P:iron-sulfur cluster assembly"/>
    <property type="evidence" value="ECO:0007669"/>
    <property type="project" value="InterPro"/>
</dbReference>
<dbReference type="GO" id="GO:0006790">
    <property type="term" value="P:sulfur compound metabolic process"/>
    <property type="evidence" value="ECO:0007669"/>
    <property type="project" value="InterPro"/>
</dbReference>
<dbReference type="FunFam" id="3.90.1010.10:FF:000004">
    <property type="entry name" value="Cysteine desulfuration protein SufE"/>
    <property type="match status" value="1"/>
</dbReference>
<dbReference type="Gene3D" id="3.90.1010.10">
    <property type="match status" value="1"/>
</dbReference>
<dbReference type="HAMAP" id="MF_01832">
    <property type="entry name" value="SufE"/>
    <property type="match status" value="1"/>
</dbReference>
<dbReference type="InterPro" id="IPR023939">
    <property type="entry name" value="Cysteine_desulfuration_SufE"/>
</dbReference>
<dbReference type="InterPro" id="IPR003808">
    <property type="entry name" value="Fe-S_metab-assoc_dom"/>
</dbReference>
<dbReference type="NCBIfam" id="NF006792">
    <property type="entry name" value="PRK09296.1"/>
    <property type="match status" value="1"/>
</dbReference>
<dbReference type="PANTHER" id="PTHR43597:SF3">
    <property type="entry name" value="CYSTEINE DESULFURATION PROTEIN SUFE"/>
    <property type="match status" value="1"/>
</dbReference>
<dbReference type="PANTHER" id="PTHR43597">
    <property type="entry name" value="SULFUR ACCEPTOR PROTEIN CSDE"/>
    <property type="match status" value="1"/>
</dbReference>
<dbReference type="Pfam" id="PF02657">
    <property type="entry name" value="SufE"/>
    <property type="match status" value="1"/>
</dbReference>
<dbReference type="SUPFAM" id="SSF82649">
    <property type="entry name" value="SufE/NifU"/>
    <property type="match status" value="1"/>
</dbReference>
<evidence type="ECO:0000255" key="1">
    <source>
        <dbReference type="HAMAP-Rule" id="MF_01832"/>
    </source>
</evidence>
<accession>B7MA31</accession>
<sequence>MALLPDKEKLLRNFLRCANWEEKYLYIIELGQRLPELRDEDKSPQNSIQGCQSQVWIVMRQNAQGIIELHGDSDAAIVKGLIAVVFILYDQMTPQDIVNFDVRPWFEKMALTQHLTPSRSQGLEAMIRAIRAKAAALS</sequence>
<comment type="function">
    <text evidence="1">Participates in cysteine desulfuration mediated by SufS. Cysteine desulfuration mobilizes sulfur from L-cysteine to yield L-alanine and constitutes an essential step in sulfur metabolism for biosynthesis of a variety of sulfur-containing biomolecules. Functions as a sulfur acceptor for SufS, by mediating the direct transfer of the sulfur atom from the S-sulfanylcysteine of SufS, an intermediate product of cysteine desulfuration process.</text>
</comment>
<comment type="pathway">
    <text evidence="1">Cofactor biosynthesis; iron-sulfur cluster biosynthesis.</text>
</comment>
<comment type="subunit">
    <text evidence="1">Homodimer. Interacts with SufS.</text>
</comment>
<comment type="subcellular location">
    <subcellularLocation>
        <location evidence="1">Cytoplasm</location>
    </subcellularLocation>
</comment>
<comment type="similarity">
    <text evidence="1">Belongs to the SufE family.</text>
</comment>